<protein>
    <recommendedName>
        <fullName evidence="1">tRNA(Phe) 7-((3-amino-3-carboxypropyl)-4-demethylwyosine(37)-N(4))-methyltransferase 1</fullName>
        <ecNumber evidence="1">2.1.1.282</ecNumber>
    </recommendedName>
    <alternativeName>
        <fullName evidence="1">tRNA wyosine derivatives biosynthesis protein Taw3 1</fullName>
    </alternativeName>
</protein>
<feature type="chain" id="PRO_0000157094" description="tRNA(Phe) 7-((3-amino-3-carboxypropyl)-4-demethylwyosine(37)-N(4))-methyltransferase 1">
    <location>
        <begin position="1"/>
        <end position="194"/>
    </location>
</feature>
<proteinExistence type="inferred from homology"/>
<keyword id="KW-0489">Methyltransferase</keyword>
<keyword id="KW-0949">S-adenosyl-L-methionine</keyword>
<keyword id="KW-0808">Transferase</keyword>
<keyword id="KW-0819">tRNA processing</keyword>
<sequence length="194" mass="22569">MRFTENFERAKKEALISLEIALRRGEVDEDIIPLLKKINEKPNYFTTSSCSGRISIMEMPDFGDKVNAKWLGKWHREVSLDEVLEAIRKHREGQLWLLVRSPILHVGARTLEDGIKLLNLGVSCGFKYSNIKSISDRKLIVEIRSTERLDALLGENGEILVSDDYMRKLVEIANAQVRRFKRKLKRFEERIEEL</sequence>
<comment type="function">
    <text evidence="1">S-adenosyl-L-methionine-dependent methyltransferase that acts as a component of the wyosine derivatives biosynthesis pathway. Probably methylates N-4 position of wybutosine-86 to produce wybutosine-72.</text>
</comment>
<comment type="catalytic activity">
    <reaction evidence="1">
        <text>4-demethyl-7-[(3S)-3-amino-3-carboxypropyl]wyosine(37) in tRNA(Phe) + S-adenosyl-L-methionine = 7-[(3S)-3-amino-3-carboxypropyl]wyosine(37) in tRNA(Phe) + S-adenosyl-L-homocysteine + H(+)</text>
        <dbReference type="Rhea" id="RHEA:36635"/>
        <dbReference type="Rhea" id="RHEA-COMP:10378"/>
        <dbReference type="Rhea" id="RHEA-COMP:10379"/>
        <dbReference type="ChEBI" id="CHEBI:15378"/>
        <dbReference type="ChEBI" id="CHEBI:57856"/>
        <dbReference type="ChEBI" id="CHEBI:59789"/>
        <dbReference type="ChEBI" id="CHEBI:73543"/>
        <dbReference type="ChEBI" id="CHEBI:73550"/>
        <dbReference type="EC" id="2.1.1.282"/>
    </reaction>
</comment>
<comment type="similarity">
    <text evidence="1">Belongs to the TYW3 family.</text>
</comment>
<dbReference type="EC" id="2.1.1.282" evidence="1"/>
<dbReference type="EMBL" id="AJ248285">
    <property type="protein sequence ID" value="CAB49831.1"/>
    <property type="molecule type" value="Genomic_DNA"/>
</dbReference>
<dbReference type="EMBL" id="HE613800">
    <property type="protein sequence ID" value="CCE70325.1"/>
    <property type="molecule type" value="Genomic_DNA"/>
</dbReference>
<dbReference type="PIR" id="F75139">
    <property type="entry name" value="F75139"/>
</dbReference>
<dbReference type="RefSeq" id="WP_010868040.1">
    <property type="nucleotide sequence ID" value="NC_000868.1"/>
</dbReference>
<dbReference type="SMR" id="Q9V074"/>
<dbReference type="STRING" id="272844.PAB0615"/>
<dbReference type="KEGG" id="pab:PAB0615"/>
<dbReference type="PATRIC" id="fig|272844.11.peg.971"/>
<dbReference type="eggNOG" id="arCOG04156">
    <property type="taxonomic scope" value="Archaea"/>
</dbReference>
<dbReference type="HOGENOM" id="CLU_047426_2_0_2"/>
<dbReference type="OrthoDB" id="19299at2157"/>
<dbReference type="PhylomeDB" id="Q9V074"/>
<dbReference type="BioCyc" id="MetaCyc:MONOMER-19457"/>
<dbReference type="Proteomes" id="UP000000810">
    <property type="component" value="Chromosome"/>
</dbReference>
<dbReference type="Proteomes" id="UP000009139">
    <property type="component" value="Chromosome"/>
</dbReference>
<dbReference type="GO" id="GO:0008175">
    <property type="term" value="F:tRNA methyltransferase activity"/>
    <property type="evidence" value="ECO:0007669"/>
    <property type="project" value="InterPro"/>
</dbReference>
<dbReference type="GO" id="GO:0030488">
    <property type="term" value="P:tRNA methylation"/>
    <property type="evidence" value="ECO:0007669"/>
    <property type="project" value="InterPro"/>
</dbReference>
<dbReference type="GO" id="GO:0031591">
    <property type="term" value="P:wybutosine biosynthetic process"/>
    <property type="evidence" value="ECO:0007669"/>
    <property type="project" value="InterPro"/>
</dbReference>
<dbReference type="FunFam" id="3.30.1960.10:FF:000010">
    <property type="entry name" value="tRNA(Phe) 7-((3-amino-3-carboxypropyl)-4-demethylwyosine(37)-N(4))-methyltransferase 1"/>
    <property type="match status" value="1"/>
</dbReference>
<dbReference type="Gene3D" id="3.30.1960.10">
    <property type="entry name" value="tRNA wybutosine-synthesizing-like"/>
    <property type="match status" value="1"/>
</dbReference>
<dbReference type="HAMAP" id="MF_00266">
    <property type="entry name" value="TYW3_archaea"/>
    <property type="match status" value="1"/>
</dbReference>
<dbReference type="InterPro" id="IPR022908">
    <property type="entry name" value="Taw3"/>
</dbReference>
<dbReference type="InterPro" id="IPR003827">
    <property type="entry name" value="tRNA_yW-synthesising"/>
</dbReference>
<dbReference type="InterPro" id="IPR036602">
    <property type="entry name" value="tRNA_yW-synthesising-like_sf"/>
</dbReference>
<dbReference type="NCBIfam" id="NF003266">
    <property type="entry name" value="PRK04235.1-5"/>
    <property type="match status" value="1"/>
</dbReference>
<dbReference type="NCBIfam" id="NF003267">
    <property type="entry name" value="PRK04235.1-6"/>
    <property type="match status" value="1"/>
</dbReference>
<dbReference type="NCBIfam" id="NF047731">
    <property type="entry name" value="tRNAMtaseTaw3"/>
    <property type="match status" value="1"/>
</dbReference>
<dbReference type="PANTHER" id="PTHR48418">
    <property type="entry name" value="TRNA WYBUTOSINE-SYNTHESIZING PROTEIN 3"/>
    <property type="match status" value="1"/>
</dbReference>
<dbReference type="PANTHER" id="PTHR48418:SF1">
    <property type="entry name" value="TRNA WYBUTOSINE-SYNTHESIZING PROTEIN 3"/>
    <property type="match status" value="1"/>
</dbReference>
<dbReference type="Pfam" id="PF02676">
    <property type="entry name" value="TYW3"/>
    <property type="match status" value="1"/>
</dbReference>
<dbReference type="SUPFAM" id="SSF111278">
    <property type="entry name" value="SSo0622-like"/>
    <property type="match status" value="1"/>
</dbReference>
<reference key="1">
    <citation type="journal article" date="2003" name="Mol. Microbiol.">
        <title>An integrated analysis of the genome of the hyperthermophilic archaeon Pyrococcus abyssi.</title>
        <authorList>
            <person name="Cohen G.N."/>
            <person name="Barbe V."/>
            <person name="Flament D."/>
            <person name="Galperin M."/>
            <person name="Heilig R."/>
            <person name="Lecompte O."/>
            <person name="Poch O."/>
            <person name="Prieur D."/>
            <person name="Querellou J."/>
            <person name="Ripp R."/>
            <person name="Thierry J.-C."/>
            <person name="Van der Oost J."/>
            <person name="Weissenbach J."/>
            <person name="Zivanovic Y."/>
            <person name="Forterre P."/>
        </authorList>
    </citation>
    <scope>NUCLEOTIDE SEQUENCE [LARGE SCALE GENOMIC DNA]</scope>
    <source>
        <strain>GE5 / Orsay</strain>
    </source>
</reference>
<reference key="2">
    <citation type="journal article" date="2012" name="Curr. Microbiol.">
        <title>Re-annotation of two hyperthermophilic archaea Pyrococcus abyssi GE5 and Pyrococcus furiosus DSM 3638.</title>
        <authorList>
            <person name="Gao J."/>
            <person name="Wang J."/>
        </authorList>
    </citation>
    <scope>GENOME REANNOTATION</scope>
    <source>
        <strain>GE5 / Orsay</strain>
    </source>
</reference>
<organism>
    <name type="scientific">Pyrococcus abyssi (strain GE5 / Orsay)</name>
    <dbReference type="NCBI Taxonomy" id="272844"/>
    <lineage>
        <taxon>Archaea</taxon>
        <taxon>Methanobacteriati</taxon>
        <taxon>Methanobacteriota</taxon>
        <taxon>Thermococci</taxon>
        <taxon>Thermococcales</taxon>
        <taxon>Thermococcaceae</taxon>
        <taxon>Pyrococcus</taxon>
    </lineage>
</organism>
<evidence type="ECO:0000255" key="1">
    <source>
        <dbReference type="HAMAP-Rule" id="MF_00266"/>
    </source>
</evidence>
<gene>
    <name evidence="1" type="primary">taw3-1</name>
    <name type="ordered locus">PYRAB09170</name>
    <name type="ORF">PAB0615</name>
</gene>
<accession>Q9V074</accession>
<accession>G8ZI84</accession>
<name>TYW31_PYRAB</name>